<feature type="chain" id="PRO_1000144692" description="Large ribosomal subunit protein uL30">
    <location>
        <begin position="1"/>
        <end position="61"/>
    </location>
</feature>
<name>RL30_LACCB</name>
<accession>B3WAK0</accession>
<reference key="1">
    <citation type="submission" date="2008-06" db="EMBL/GenBank/DDBJ databases">
        <title>Lactobacillus casei BL23 complete genome sequence.</title>
        <authorList>
            <person name="Maze A."/>
            <person name="Boel G."/>
            <person name="Bourand A."/>
            <person name="Loux V."/>
            <person name="Gibrat J.F."/>
            <person name="Zuniga M."/>
            <person name="Hartke A."/>
            <person name="Deutscher J."/>
        </authorList>
    </citation>
    <scope>NUCLEOTIDE SEQUENCE [LARGE SCALE GENOMIC DNA]</scope>
    <source>
        <strain>BL23</strain>
    </source>
</reference>
<organism>
    <name type="scientific">Lacticaseibacillus casei (strain BL23)</name>
    <name type="common">Lactobacillus casei</name>
    <dbReference type="NCBI Taxonomy" id="543734"/>
    <lineage>
        <taxon>Bacteria</taxon>
        <taxon>Bacillati</taxon>
        <taxon>Bacillota</taxon>
        <taxon>Bacilli</taxon>
        <taxon>Lactobacillales</taxon>
        <taxon>Lactobacillaceae</taxon>
        <taxon>Lacticaseibacillus</taxon>
    </lineage>
</organism>
<comment type="subunit">
    <text evidence="1">Part of the 50S ribosomal subunit.</text>
</comment>
<comment type="similarity">
    <text evidence="1">Belongs to the universal ribosomal protein uL30 family.</text>
</comment>
<protein>
    <recommendedName>
        <fullName evidence="1">Large ribosomal subunit protein uL30</fullName>
    </recommendedName>
    <alternativeName>
        <fullName evidence="2">50S ribosomal protein L30</fullName>
    </alternativeName>
</protein>
<keyword id="KW-0687">Ribonucleoprotein</keyword>
<keyword id="KW-0689">Ribosomal protein</keyword>
<gene>
    <name evidence="1" type="primary">rpmD</name>
    <name type="ordered locus">LCABL_26530</name>
</gene>
<proteinExistence type="inferred from homology"/>
<evidence type="ECO:0000255" key="1">
    <source>
        <dbReference type="HAMAP-Rule" id="MF_01371"/>
    </source>
</evidence>
<evidence type="ECO:0000305" key="2"/>
<dbReference type="EMBL" id="FM177140">
    <property type="protein sequence ID" value="CAQ67719.1"/>
    <property type="molecule type" value="Genomic_DNA"/>
</dbReference>
<dbReference type="SMR" id="B3WAK0"/>
<dbReference type="KEGG" id="lcb:LCABL_26530"/>
<dbReference type="HOGENOM" id="CLU_131047_2_1_9"/>
<dbReference type="GO" id="GO:0015934">
    <property type="term" value="C:large ribosomal subunit"/>
    <property type="evidence" value="ECO:0007669"/>
    <property type="project" value="InterPro"/>
</dbReference>
<dbReference type="GO" id="GO:0003735">
    <property type="term" value="F:structural constituent of ribosome"/>
    <property type="evidence" value="ECO:0007669"/>
    <property type="project" value="InterPro"/>
</dbReference>
<dbReference type="GO" id="GO:0006412">
    <property type="term" value="P:translation"/>
    <property type="evidence" value="ECO:0007669"/>
    <property type="project" value="UniProtKB-UniRule"/>
</dbReference>
<dbReference type="CDD" id="cd01658">
    <property type="entry name" value="Ribosomal_L30"/>
    <property type="match status" value="1"/>
</dbReference>
<dbReference type="Gene3D" id="3.30.1390.20">
    <property type="entry name" value="Ribosomal protein L30, ferredoxin-like fold domain"/>
    <property type="match status" value="1"/>
</dbReference>
<dbReference type="HAMAP" id="MF_01371_B">
    <property type="entry name" value="Ribosomal_uL30_B"/>
    <property type="match status" value="1"/>
</dbReference>
<dbReference type="InterPro" id="IPR036919">
    <property type="entry name" value="Ribo_uL30_ferredoxin-like_sf"/>
</dbReference>
<dbReference type="InterPro" id="IPR005996">
    <property type="entry name" value="Ribosomal_uL30_bac-type"/>
</dbReference>
<dbReference type="InterPro" id="IPR016082">
    <property type="entry name" value="Ribosomal_uL30_ferredoxin-like"/>
</dbReference>
<dbReference type="NCBIfam" id="TIGR01308">
    <property type="entry name" value="rpmD_bact"/>
    <property type="match status" value="1"/>
</dbReference>
<dbReference type="Pfam" id="PF00327">
    <property type="entry name" value="Ribosomal_L30"/>
    <property type="match status" value="1"/>
</dbReference>
<dbReference type="PIRSF" id="PIRSF002211">
    <property type="entry name" value="Ribosomal_L30_bac-type"/>
    <property type="match status" value="1"/>
</dbReference>
<dbReference type="SUPFAM" id="SSF55129">
    <property type="entry name" value="Ribosomal protein L30p/L7e"/>
    <property type="match status" value="1"/>
</dbReference>
<sequence length="61" mass="6749">MAQLKITLTRSAAHRLPKQRKIVKELGLARVNSSVIKPDNAATRGAIFQISHLVSVEEIKD</sequence>